<accession>Q1MHI1</accession>
<proteinExistence type="inferred from homology"/>
<gene>
    <name evidence="1" type="primary">aroQ</name>
    <name type="ordered locus">RL2090</name>
</gene>
<feature type="chain" id="PRO_1000023502" description="3-dehydroquinate dehydratase">
    <location>
        <begin position="1"/>
        <end position="145"/>
    </location>
</feature>
<feature type="active site" description="Proton acceptor" evidence="1">
    <location>
        <position position="24"/>
    </location>
</feature>
<feature type="active site" description="Proton donor" evidence="1">
    <location>
        <position position="101"/>
    </location>
</feature>
<feature type="binding site" evidence="1">
    <location>
        <position position="75"/>
    </location>
    <ligand>
        <name>substrate</name>
    </ligand>
</feature>
<feature type="binding site" evidence="1">
    <location>
        <position position="81"/>
    </location>
    <ligand>
        <name>substrate</name>
    </ligand>
</feature>
<feature type="binding site" evidence="1">
    <location>
        <position position="88"/>
    </location>
    <ligand>
        <name>substrate</name>
    </ligand>
</feature>
<feature type="binding site" evidence="1">
    <location>
        <begin position="102"/>
        <end position="103"/>
    </location>
    <ligand>
        <name>substrate</name>
    </ligand>
</feature>
<feature type="binding site" evidence="1">
    <location>
        <position position="112"/>
    </location>
    <ligand>
        <name>substrate</name>
    </ligand>
</feature>
<feature type="site" description="Transition state stabilizer" evidence="1">
    <location>
        <position position="19"/>
    </location>
</feature>
<comment type="function">
    <text evidence="1">Catalyzes a trans-dehydration via an enolate intermediate.</text>
</comment>
<comment type="catalytic activity">
    <reaction evidence="1">
        <text>3-dehydroquinate = 3-dehydroshikimate + H2O</text>
        <dbReference type="Rhea" id="RHEA:21096"/>
        <dbReference type="ChEBI" id="CHEBI:15377"/>
        <dbReference type="ChEBI" id="CHEBI:16630"/>
        <dbReference type="ChEBI" id="CHEBI:32364"/>
        <dbReference type="EC" id="4.2.1.10"/>
    </reaction>
</comment>
<comment type="pathway">
    <text evidence="1">Metabolic intermediate biosynthesis; chorismate biosynthesis; chorismate from D-erythrose 4-phosphate and phosphoenolpyruvate: step 3/7.</text>
</comment>
<comment type="subunit">
    <text evidence="1">Homododecamer.</text>
</comment>
<comment type="similarity">
    <text evidence="1">Belongs to the type-II 3-dehydroquinase family.</text>
</comment>
<organism>
    <name type="scientific">Rhizobium johnstonii (strain DSM 114642 / LMG 32736 / 3841)</name>
    <name type="common">Rhizobium leguminosarum bv. viciae</name>
    <dbReference type="NCBI Taxonomy" id="216596"/>
    <lineage>
        <taxon>Bacteria</taxon>
        <taxon>Pseudomonadati</taxon>
        <taxon>Pseudomonadota</taxon>
        <taxon>Alphaproteobacteria</taxon>
        <taxon>Hyphomicrobiales</taxon>
        <taxon>Rhizobiaceae</taxon>
        <taxon>Rhizobium/Agrobacterium group</taxon>
        <taxon>Rhizobium</taxon>
        <taxon>Rhizobium johnstonii</taxon>
    </lineage>
</organism>
<keyword id="KW-0028">Amino-acid biosynthesis</keyword>
<keyword id="KW-0057">Aromatic amino acid biosynthesis</keyword>
<keyword id="KW-0456">Lyase</keyword>
<name>AROQ_RHIJ3</name>
<reference key="1">
    <citation type="journal article" date="2006" name="Genome Biol.">
        <title>The genome of Rhizobium leguminosarum has recognizable core and accessory components.</title>
        <authorList>
            <person name="Young J.P.W."/>
            <person name="Crossman L.C."/>
            <person name="Johnston A.W.B."/>
            <person name="Thomson N.R."/>
            <person name="Ghazoui Z.F."/>
            <person name="Hull K.H."/>
            <person name="Wexler M."/>
            <person name="Curson A.R.J."/>
            <person name="Todd J.D."/>
            <person name="Poole P.S."/>
            <person name="Mauchline T.H."/>
            <person name="East A.K."/>
            <person name="Quail M.A."/>
            <person name="Churcher C."/>
            <person name="Arrowsmith C."/>
            <person name="Cherevach I."/>
            <person name="Chillingworth T."/>
            <person name="Clarke K."/>
            <person name="Cronin A."/>
            <person name="Davis P."/>
            <person name="Fraser A."/>
            <person name="Hance Z."/>
            <person name="Hauser H."/>
            <person name="Jagels K."/>
            <person name="Moule S."/>
            <person name="Mungall K."/>
            <person name="Norbertczak H."/>
            <person name="Rabbinowitsch E."/>
            <person name="Sanders M."/>
            <person name="Simmonds M."/>
            <person name="Whitehead S."/>
            <person name="Parkhill J."/>
        </authorList>
    </citation>
    <scope>NUCLEOTIDE SEQUENCE [LARGE SCALE GENOMIC DNA]</scope>
    <source>
        <strain>DSM 114642 / LMG 32736 / 3841</strain>
    </source>
</reference>
<dbReference type="EC" id="4.2.1.10" evidence="1"/>
<dbReference type="EMBL" id="AM236080">
    <property type="protein sequence ID" value="CAK07582.1"/>
    <property type="molecule type" value="Genomic_DNA"/>
</dbReference>
<dbReference type="RefSeq" id="WP_011651695.1">
    <property type="nucleotide sequence ID" value="NC_008380.1"/>
</dbReference>
<dbReference type="SMR" id="Q1MHI1"/>
<dbReference type="EnsemblBacteria" id="CAK07582">
    <property type="protein sequence ID" value="CAK07582"/>
    <property type="gene ID" value="RL2090"/>
</dbReference>
<dbReference type="GeneID" id="61423703"/>
<dbReference type="KEGG" id="rle:RL2090"/>
<dbReference type="eggNOG" id="COG0757">
    <property type="taxonomic scope" value="Bacteria"/>
</dbReference>
<dbReference type="HOGENOM" id="CLU_090968_2_0_5"/>
<dbReference type="UniPathway" id="UPA00053">
    <property type="reaction ID" value="UER00086"/>
</dbReference>
<dbReference type="Proteomes" id="UP000006575">
    <property type="component" value="Chromosome"/>
</dbReference>
<dbReference type="GO" id="GO:0003855">
    <property type="term" value="F:3-dehydroquinate dehydratase activity"/>
    <property type="evidence" value="ECO:0007669"/>
    <property type="project" value="UniProtKB-UniRule"/>
</dbReference>
<dbReference type="GO" id="GO:0008652">
    <property type="term" value="P:amino acid biosynthetic process"/>
    <property type="evidence" value="ECO:0007669"/>
    <property type="project" value="UniProtKB-KW"/>
</dbReference>
<dbReference type="GO" id="GO:0009073">
    <property type="term" value="P:aromatic amino acid family biosynthetic process"/>
    <property type="evidence" value="ECO:0007669"/>
    <property type="project" value="UniProtKB-KW"/>
</dbReference>
<dbReference type="GO" id="GO:0009423">
    <property type="term" value="P:chorismate biosynthetic process"/>
    <property type="evidence" value="ECO:0007669"/>
    <property type="project" value="UniProtKB-UniRule"/>
</dbReference>
<dbReference type="GO" id="GO:0019631">
    <property type="term" value="P:quinate catabolic process"/>
    <property type="evidence" value="ECO:0007669"/>
    <property type="project" value="TreeGrafter"/>
</dbReference>
<dbReference type="CDD" id="cd00466">
    <property type="entry name" value="DHQase_II"/>
    <property type="match status" value="1"/>
</dbReference>
<dbReference type="Gene3D" id="3.40.50.9100">
    <property type="entry name" value="Dehydroquinase, class II"/>
    <property type="match status" value="1"/>
</dbReference>
<dbReference type="HAMAP" id="MF_00169">
    <property type="entry name" value="AroQ"/>
    <property type="match status" value="1"/>
</dbReference>
<dbReference type="InterPro" id="IPR001874">
    <property type="entry name" value="DHquinase_II"/>
</dbReference>
<dbReference type="InterPro" id="IPR018509">
    <property type="entry name" value="DHquinase_II_CS"/>
</dbReference>
<dbReference type="InterPro" id="IPR036441">
    <property type="entry name" value="DHquinase_II_sf"/>
</dbReference>
<dbReference type="NCBIfam" id="TIGR01088">
    <property type="entry name" value="aroQ"/>
    <property type="match status" value="1"/>
</dbReference>
<dbReference type="NCBIfam" id="NF003805">
    <property type="entry name" value="PRK05395.1-2"/>
    <property type="match status" value="1"/>
</dbReference>
<dbReference type="NCBIfam" id="NF003806">
    <property type="entry name" value="PRK05395.1-3"/>
    <property type="match status" value="1"/>
</dbReference>
<dbReference type="NCBIfam" id="NF003807">
    <property type="entry name" value="PRK05395.1-4"/>
    <property type="match status" value="1"/>
</dbReference>
<dbReference type="PANTHER" id="PTHR21272">
    <property type="entry name" value="CATABOLIC 3-DEHYDROQUINASE"/>
    <property type="match status" value="1"/>
</dbReference>
<dbReference type="PANTHER" id="PTHR21272:SF3">
    <property type="entry name" value="CATABOLIC 3-DEHYDROQUINASE"/>
    <property type="match status" value="1"/>
</dbReference>
<dbReference type="Pfam" id="PF01220">
    <property type="entry name" value="DHquinase_II"/>
    <property type="match status" value="1"/>
</dbReference>
<dbReference type="PIRSF" id="PIRSF001399">
    <property type="entry name" value="DHquinase_II"/>
    <property type="match status" value="1"/>
</dbReference>
<dbReference type="SUPFAM" id="SSF52304">
    <property type="entry name" value="Type II 3-dehydroquinate dehydratase"/>
    <property type="match status" value="1"/>
</dbReference>
<dbReference type="PROSITE" id="PS01029">
    <property type="entry name" value="DEHYDROQUINASE_II"/>
    <property type="match status" value="1"/>
</dbReference>
<sequence length="145" mass="15739">MTQTIFVLNGPNLNMLGKREPGIYGGKTLKDIEADCKAAGRELGLDIDFRQSNHEGTLVDWFHEADEKAVGVAINAGAYTHTSVALHDAIRAISIPVVELHISNVHAREEFRHKSMIAPACKGVICGFGPHSYILALHALKNITA</sequence>
<evidence type="ECO:0000255" key="1">
    <source>
        <dbReference type="HAMAP-Rule" id="MF_00169"/>
    </source>
</evidence>
<protein>
    <recommendedName>
        <fullName evidence="1">3-dehydroquinate dehydratase</fullName>
        <shortName evidence="1">3-dehydroquinase</shortName>
        <ecNumber evidence="1">4.2.1.10</ecNumber>
    </recommendedName>
    <alternativeName>
        <fullName evidence="1">Type II DHQase</fullName>
    </alternativeName>
</protein>